<proteinExistence type="inferred from homology"/>
<comment type="function">
    <text evidence="1">The RuvA-RuvB-RuvC complex processes Holliday junction (HJ) DNA during genetic recombination and DNA repair, while the RuvA-RuvB complex plays an important role in the rescue of blocked DNA replication forks via replication fork reversal (RFR). RuvA specifically binds to HJ cruciform DNA, conferring on it an open structure. The RuvB hexamer acts as an ATP-dependent pump, pulling dsDNA into and through the RuvAB complex. RuvB forms 2 homohexamers on either side of HJ DNA bound by 1 or 2 RuvA tetramers; 4 subunits per hexamer contact DNA at a time. Coordinated motions by a converter formed by DNA-disengaged RuvB subunits stimulates ATP hydrolysis and nucleotide exchange. Immobilization of the converter enables RuvB to convert the ATP-contained energy into a lever motion, pulling 2 nucleotides of DNA out of the RuvA tetramer per ATP hydrolyzed, thus driving DNA branch migration. The RuvB motors rotate together with the DNA substrate, which together with the progressing nucleotide cycle form the mechanistic basis for DNA recombination by continuous HJ branch migration. Branch migration allows RuvC to scan DNA until it finds its consensus sequence, where it cleaves and resolves cruciform DNA.</text>
</comment>
<comment type="catalytic activity">
    <reaction evidence="1">
        <text>ATP + H2O = ADP + phosphate + H(+)</text>
        <dbReference type="Rhea" id="RHEA:13065"/>
        <dbReference type="ChEBI" id="CHEBI:15377"/>
        <dbReference type="ChEBI" id="CHEBI:15378"/>
        <dbReference type="ChEBI" id="CHEBI:30616"/>
        <dbReference type="ChEBI" id="CHEBI:43474"/>
        <dbReference type="ChEBI" id="CHEBI:456216"/>
    </reaction>
</comment>
<comment type="subunit">
    <text evidence="1">Homohexamer. Forms an RuvA(8)-RuvB(12)-Holliday junction (HJ) complex. HJ DNA is sandwiched between 2 RuvA tetramers; dsDNA enters through RuvA and exits via RuvB. An RuvB hexamer assembles on each DNA strand where it exits the tetramer. Each RuvB hexamer is contacted by two RuvA subunits (via domain III) on 2 adjacent RuvB subunits; this complex drives branch migration. In the full resolvosome a probable DNA-RuvA(4)-RuvB(12)-RuvC(2) complex forms which resolves the HJ.</text>
</comment>
<comment type="subcellular location">
    <subcellularLocation>
        <location evidence="1">Cytoplasm</location>
    </subcellularLocation>
</comment>
<comment type="domain">
    <text evidence="1">Has 3 domains, the large (RuvB-L) and small ATPase (RuvB-S) domains and the C-terminal head (RuvB-H) domain. The head domain binds DNA, while the ATPase domains jointly bind ATP, ADP or are empty depending on the state of the subunit in the translocation cycle. During a single DNA translocation step the structure of each domain remains the same, but their relative positions change.</text>
</comment>
<comment type="similarity">
    <text evidence="1">Belongs to the RuvB family.</text>
</comment>
<reference key="1">
    <citation type="journal article" date="2007" name="PLoS Genet.">
        <title>Meningococcal genetic variation mechanisms viewed through comparative analysis of serogroup C strain FAM18.</title>
        <authorList>
            <person name="Bentley S.D."/>
            <person name="Vernikos G.S."/>
            <person name="Snyder L.A.S."/>
            <person name="Churcher C."/>
            <person name="Arrowsmith C."/>
            <person name="Chillingworth T."/>
            <person name="Cronin A."/>
            <person name="Davis P.H."/>
            <person name="Holroyd N.E."/>
            <person name="Jagels K."/>
            <person name="Maddison M."/>
            <person name="Moule S."/>
            <person name="Rabbinowitsch E."/>
            <person name="Sharp S."/>
            <person name="Unwin L."/>
            <person name="Whitehead S."/>
            <person name="Quail M.A."/>
            <person name="Achtman M."/>
            <person name="Barrell B.G."/>
            <person name="Saunders N.J."/>
            <person name="Parkhill J."/>
        </authorList>
    </citation>
    <scope>NUCLEOTIDE SEQUENCE [LARGE SCALE GENOMIC DNA]</scope>
    <source>
        <strain>ATCC 700532 / DSM 15464 / FAM18</strain>
    </source>
</reference>
<keyword id="KW-0067">ATP-binding</keyword>
<keyword id="KW-0963">Cytoplasm</keyword>
<keyword id="KW-0227">DNA damage</keyword>
<keyword id="KW-0233">DNA recombination</keyword>
<keyword id="KW-0234">DNA repair</keyword>
<keyword id="KW-0238">DNA-binding</keyword>
<keyword id="KW-0378">Hydrolase</keyword>
<keyword id="KW-0547">Nucleotide-binding</keyword>
<sequence>MLQTDNLTAAQPQRIVAAQTASAQEELLERALRPKTLDDYIGQDKAKEQLAIFIQAAKKRGEALDHVLLFGPPGLGKTTLAHIIAKELGVNLRQTSGPVLERAGDLAALLTNLDPHDVLFIDEIHRLSPVVEEILYPALEDYRLDIMIGEGPAARSVKIDLPPFTLIGATTRAGMLTNPLRDRFGIVSRLEFYENRDLTTIVSRSAQLLQLDMSEEGAEEIAKRSRGTPRIANRLLRRVRDFADVKNNGTIDGGIADAALSMLDVDAQGLDVMDRKFLEAVLHKFGGGPVGLDNVAAAIGESTDTIEDVIEPYLIQQGFLQRTPRGRMATERAYLHFGLPVEK</sequence>
<name>RUVB_NEIMF</name>
<dbReference type="EC" id="3.6.4.-" evidence="1"/>
<dbReference type="EMBL" id="AM421808">
    <property type="protein sequence ID" value="CAM10393.1"/>
    <property type="molecule type" value="Genomic_DNA"/>
</dbReference>
<dbReference type="RefSeq" id="WP_002220958.1">
    <property type="nucleotide sequence ID" value="NC_008767.1"/>
</dbReference>
<dbReference type="SMR" id="A1KU52"/>
<dbReference type="KEGG" id="nmc:NMC1144"/>
<dbReference type="HOGENOM" id="CLU_055599_1_0_4"/>
<dbReference type="Proteomes" id="UP000002286">
    <property type="component" value="Chromosome"/>
</dbReference>
<dbReference type="GO" id="GO:0005737">
    <property type="term" value="C:cytoplasm"/>
    <property type="evidence" value="ECO:0007669"/>
    <property type="project" value="UniProtKB-SubCell"/>
</dbReference>
<dbReference type="GO" id="GO:0048476">
    <property type="term" value="C:Holliday junction resolvase complex"/>
    <property type="evidence" value="ECO:0007669"/>
    <property type="project" value="UniProtKB-UniRule"/>
</dbReference>
<dbReference type="GO" id="GO:0005524">
    <property type="term" value="F:ATP binding"/>
    <property type="evidence" value="ECO:0007669"/>
    <property type="project" value="UniProtKB-UniRule"/>
</dbReference>
<dbReference type="GO" id="GO:0016887">
    <property type="term" value="F:ATP hydrolysis activity"/>
    <property type="evidence" value="ECO:0007669"/>
    <property type="project" value="InterPro"/>
</dbReference>
<dbReference type="GO" id="GO:0000400">
    <property type="term" value="F:four-way junction DNA binding"/>
    <property type="evidence" value="ECO:0007669"/>
    <property type="project" value="UniProtKB-UniRule"/>
</dbReference>
<dbReference type="GO" id="GO:0009378">
    <property type="term" value="F:four-way junction helicase activity"/>
    <property type="evidence" value="ECO:0007669"/>
    <property type="project" value="InterPro"/>
</dbReference>
<dbReference type="GO" id="GO:0006310">
    <property type="term" value="P:DNA recombination"/>
    <property type="evidence" value="ECO:0007669"/>
    <property type="project" value="UniProtKB-UniRule"/>
</dbReference>
<dbReference type="GO" id="GO:0006281">
    <property type="term" value="P:DNA repair"/>
    <property type="evidence" value="ECO:0007669"/>
    <property type="project" value="UniProtKB-UniRule"/>
</dbReference>
<dbReference type="CDD" id="cd00009">
    <property type="entry name" value="AAA"/>
    <property type="match status" value="1"/>
</dbReference>
<dbReference type="FunFam" id="1.10.10.10:FF:000086">
    <property type="entry name" value="Holliday junction ATP-dependent DNA helicase RuvB"/>
    <property type="match status" value="1"/>
</dbReference>
<dbReference type="FunFam" id="1.10.8.60:FF:000023">
    <property type="entry name" value="Holliday junction ATP-dependent DNA helicase RuvB"/>
    <property type="match status" value="1"/>
</dbReference>
<dbReference type="FunFam" id="3.40.50.300:FF:000073">
    <property type="entry name" value="Holliday junction ATP-dependent DNA helicase RuvB"/>
    <property type="match status" value="1"/>
</dbReference>
<dbReference type="Gene3D" id="1.10.8.60">
    <property type="match status" value="1"/>
</dbReference>
<dbReference type="Gene3D" id="3.40.50.300">
    <property type="entry name" value="P-loop containing nucleotide triphosphate hydrolases"/>
    <property type="match status" value="1"/>
</dbReference>
<dbReference type="Gene3D" id="1.10.10.10">
    <property type="entry name" value="Winged helix-like DNA-binding domain superfamily/Winged helix DNA-binding domain"/>
    <property type="match status" value="1"/>
</dbReference>
<dbReference type="HAMAP" id="MF_00016">
    <property type="entry name" value="DNA_HJ_migration_RuvB"/>
    <property type="match status" value="1"/>
</dbReference>
<dbReference type="InterPro" id="IPR003593">
    <property type="entry name" value="AAA+_ATPase"/>
</dbReference>
<dbReference type="InterPro" id="IPR041445">
    <property type="entry name" value="AAA_lid_4"/>
</dbReference>
<dbReference type="InterPro" id="IPR004605">
    <property type="entry name" value="DNA_helicase_Holl-junc_RuvB"/>
</dbReference>
<dbReference type="InterPro" id="IPR027417">
    <property type="entry name" value="P-loop_NTPase"/>
</dbReference>
<dbReference type="InterPro" id="IPR008824">
    <property type="entry name" value="RuvB-like_N"/>
</dbReference>
<dbReference type="InterPro" id="IPR008823">
    <property type="entry name" value="RuvB_C"/>
</dbReference>
<dbReference type="InterPro" id="IPR036388">
    <property type="entry name" value="WH-like_DNA-bd_sf"/>
</dbReference>
<dbReference type="InterPro" id="IPR036390">
    <property type="entry name" value="WH_DNA-bd_sf"/>
</dbReference>
<dbReference type="NCBIfam" id="NF000868">
    <property type="entry name" value="PRK00080.1"/>
    <property type="match status" value="1"/>
</dbReference>
<dbReference type="NCBIfam" id="TIGR00635">
    <property type="entry name" value="ruvB"/>
    <property type="match status" value="1"/>
</dbReference>
<dbReference type="PANTHER" id="PTHR42848">
    <property type="match status" value="1"/>
</dbReference>
<dbReference type="PANTHER" id="PTHR42848:SF1">
    <property type="entry name" value="HOLLIDAY JUNCTION BRANCH MIGRATION COMPLEX SUBUNIT RUVB"/>
    <property type="match status" value="1"/>
</dbReference>
<dbReference type="Pfam" id="PF17864">
    <property type="entry name" value="AAA_lid_4"/>
    <property type="match status" value="1"/>
</dbReference>
<dbReference type="Pfam" id="PF05491">
    <property type="entry name" value="RuvB_C"/>
    <property type="match status" value="1"/>
</dbReference>
<dbReference type="Pfam" id="PF05496">
    <property type="entry name" value="RuvB_N"/>
    <property type="match status" value="1"/>
</dbReference>
<dbReference type="SMART" id="SM00382">
    <property type="entry name" value="AAA"/>
    <property type="match status" value="1"/>
</dbReference>
<dbReference type="SUPFAM" id="SSF52540">
    <property type="entry name" value="P-loop containing nucleoside triphosphate hydrolases"/>
    <property type="match status" value="1"/>
</dbReference>
<dbReference type="SUPFAM" id="SSF46785">
    <property type="entry name" value="Winged helix' DNA-binding domain"/>
    <property type="match status" value="1"/>
</dbReference>
<accession>A1KU52</accession>
<evidence type="ECO:0000255" key="1">
    <source>
        <dbReference type="HAMAP-Rule" id="MF_00016"/>
    </source>
</evidence>
<feature type="chain" id="PRO_1000001432" description="Holliday junction branch migration complex subunit RuvB">
    <location>
        <begin position="1"/>
        <end position="343"/>
    </location>
</feature>
<feature type="region of interest" description="Large ATPase domain (RuvB-L)" evidence="1">
    <location>
        <begin position="4"/>
        <end position="193"/>
    </location>
</feature>
<feature type="region of interest" description="Small ATPAse domain (RuvB-S)" evidence="1">
    <location>
        <begin position="194"/>
        <end position="264"/>
    </location>
</feature>
<feature type="region of interest" description="Head domain (RuvB-H)" evidence="1">
    <location>
        <begin position="267"/>
        <end position="343"/>
    </location>
</feature>
<feature type="binding site" evidence="1">
    <location>
        <position position="32"/>
    </location>
    <ligand>
        <name>ATP</name>
        <dbReference type="ChEBI" id="CHEBI:30616"/>
    </ligand>
</feature>
<feature type="binding site" evidence="1">
    <location>
        <position position="33"/>
    </location>
    <ligand>
        <name>ATP</name>
        <dbReference type="ChEBI" id="CHEBI:30616"/>
    </ligand>
</feature>
<feature type="binding site" evidence="1">
    <location>
        <position position="74"/>
    </location>
    <ligand>
        <name>ATP</name>
        <dbReference type="ChEBI" id="CHEBI:30616"/>
    </ligand>
</feature>
<feature type="binding site" evidence="1">
    <location>
        <position position="77"/>
    </location>
    <ligand>
        <name>ATP</name>
        <dbReference type="ChEBI" id="CHEBI:30616"/>
    </ligand>
</feature>
<feature type="binding site" evidence="1">
    <location>
        <position position="78"/>
    </location>
    <ligand>
        <name>ATP</name>
        <dbReference type="ChEBI" id="CHEBI:30616"/>
    </ligand>
</feature>
<feature type="binding site" evidence="1">
    <location>
        <position position="78"/>
    </location>
    <ligand>
        <name>Mg(2+)</name>
        <dbReference type="ChEBI" id="CHEBI:18420"/>
    </ligand>
</feature>
<feature type="binding site" evidence="1">
    <location>
        <position position="79"/>
    </location>
    <ligand>
        <name>ATP</name>
        <dbReference type="ChEBI" id="CHEBI:30616"/>
    </ligand>
</feature>
<feature type="binding site" evidence="1">
    <location>
        <begin position="140"/>
        <end position="142"/>
    </location>
    <ligand>
        <name>ATP</name>
        <dbReference type="ChEBI" id="CHEBI:30616"/>
    </ligand>
</feature>
<feature type="binding site" evidence="1">
    <location>
        <position position="183"/>
    </location>
    <ligand>
        <name>ATP</name>
        <dbReference type="ChEBI" id="CHEBI:30616"/>
    </ligand>
</feature>
<feature type="binding site" evidence="1">
    <location>
        <position position="193"/>
    </location>
    <ligand>
        <name>ATP</name>
        <dbReference type="ChEBI" id="CHEBI:30616"/>
    </ligand>
</feature>
<feature type="binding site" evidence="1">
    <location>
        <position position="230"/>
    </location>
    <ligand>
        <name>ATP</name>
        <dbReference type="ChEBI" id="CHEBI:30616"/>
    </ligand>
</feature>
<feature type="binding site" evidence="1">
    <location>
        <position position="322"/>
    </location>
    <ligand>
        <name>DNA</name>
        <dbReference type="ChEBI" id="CHEBI:16991"/>
    </ligand>
</feature>
<feature type="binding site" evidence="1">
    <location>
        <position position="327"/>
    </location>
    <ligand>
        <name>DNA</name>
        <dbReference type="ChEBI" id="CHEBI:16991"/>
    </ligand>
</feature>
<gene>
    <name evidence="1" type="primary">ruvB</name>
    <name type="ordered locus">NMC1144</name>
</gene>
<organism>
    <name type="scientific">Neisseria meningitidis serogroup C / serotype 2a (strain ATCC 700532 / DSM 15464 / FAM18)</name>
    <dbReference type="NCBI Taxonomy" id="272831"/>
    <lineage>
        <taxon>Bacteria</taxon>
        <taxon>Pseudomonadati</taxon>
        <taxon>Pseudomonadota</taxon>
        <taxon>Betaproteobacteria</taxon>
        <taxon>Neisseriales</taxon>
        <taxon>Neisseriaceae</taxon>
        <taxon>Neisseria</taxon>
    </lineage>
</organism>
<protein>
    <recommendedName>
        <fullName evidence="1">Holliday junction branch migration complex subunit RuvB</fullName>
        <ecNumber evidence="1">3.6.4.-</ecNumber>
    </recommendedName>
</protein>